<organism>
    <name type="scientific">Xanthobacter autotrophicus (strain ATCC BAA-1158 / Py2)</name>
    <dbReference type="NCBI Taxonomy" id="78245"/>
    <lineage>
        <taxon>Bacteria</taxon>
        <taxon>Pseudomonadati</taxon>
        <taxon>Pseudomonadota</taxon>
        <taxon>Alphaproteobacteria</taxon>
        <taxon>Hyphomicrobiales</taxon>
        <taxon>Xanthobacteraceae</taxon>
        <taxon>Xanthobacter</taxon>
    </lineage>
</organism>
<reference key="1">
    <citation type="submission" date="2007-07" db="EMBL/GenBank/DDBJ databases">
        <title>Complete sequence of chromosome of Xanthobacter autotrophicus Py2.</title>
        <authorList>
            <consortium name="US DOE Joint Genome Institute"/>
            <person name="Copeland A."/>
            <person name="Lucas S."/>
            <person name="Lapidus A."/>
            <person name="Barry K."/>
            <person name="Glavina del Rio T."/>
            <person name="Hammon N."/>
            <person name="Israni S."/>
            <person name="Dalin E."/>
            <person name="Tice H."/>
            <person name="Pitluck S."/>
            <person name="Sims D."/>
            <person name="Brettin T."/>
            <person name="Bruce D."/>
            <person name="Detter J.C."/>
            <person name="Han C."/>
            <person name="Tapia R."/>
            <person name="Brainard J."/>
            <person name="Schmutz J."/>
            <person name="Larimer F."/>
            <person name="Land M."/>
            <person name="Hauser L."/>
            <person name="Kyrpides N."/>
            <person name="Kim E."/>
            <person name="Ensigns S.A."/>
            <person name="Richardson P."/>
        </authorList>
    </citation>
    <scope>NUCLEOTIDE SEQUENCE [LARGE SCALE GENOMIC DNA]</scope>
    <source>
        <strain>ATCC BAA-1158 / Py2</strain>
    </source>
</reference>
<keyword id="KW-0240">DNA-directed RNA polymerase</keyword>
<keyword id="KW-0548">Nucleotidyltransferase</keyword>
<keyword id="KW-1185">Reference proteome</keyword>
<keyword id="KW-0804">Transcription</keyword>
<keyword id="KW-0808">Transferase</keyword>
<comment type="function">
    <text evidence="1">DNA-dependent RNA polymerase catalyzes the transcription of DNA into RNA using the four ribonucleoside triphosphates as substrates.</text>
</comment>
<comment type="catalytic activity">
    <reaction evidence="1">
        <text>RNA(n) + a ribonucleoside 5'-triphosphate = RNA(n+1) + diphosphate</text>
        <dbReference type="Rhea" id="RHEA:21248"/>
        <dbReference type="Rhea" id="RHEA-COMP:14527"/>
        <dbReference type="Rhea" id="RHEA-COMP:17342"/>
        <dbReference type="ChEBI" id="CHEBI:33019"/>
        <dbReference type="ChEBI" id="CHEBI:61557"/>
        <dbReference type="ChEBI" id="CHEBI:140395"/>
        <dbReference type="EC" id="2.7.7.6"/>
    </reaction>
</comment>
<comment type="subunit">
    <text evidence="1">Homodimer. The RNAP catalytic core consists of 2 alpha, 1 beta, 1 beta' and 1 omega subunit. When a sigma factor is associated with the core the holoenzyme is formed, which can initiate transcription.</text>
</comment>
<comment type="domain">
    <text evidence="1">The N-terminal domain is essential for RNAP assembly and basal transcription, whereas the C-terminal domain is involved in interaction with transcriptional regulators and with upstream promoter elements.</text>
</comment>
<comment type="similarity">
    <text evidence="1">Belongs to the RNA polymerase alpha chain family.</text>
</comment>
<accession>A7IPP6</accession>
<name>RPOA_XANP2</name>
<proteinExistence type="inferred from homology"/>
<dbReference type="EC" id="2.7.7.6" evidence="1"/>
<dbReference type="EMBL" id="CP000781">
    <property type="protein sequence ID" value="ABS69992.1"/>
    <property type="molecule type" value="Genomic_DNA"/>
</dbReference>
<dbReference type="SMR" id="A7IPP6"/>
<dbReference type="STRING" id="78245.Xaut_4774"/>
<dbReference type="KEGG" id="xau:Xaut_4774"/>
<dbReference type="eggNOG" id="COG0202">
    <property type="taxonomic scope" value="Bacteria"/>
</dbReference>
<dbReference type="HOGENOM" id="CLU_053084_0_0_5"/>
<dbReference type="OrthoDB" id="9805706at2"/>
<dbReference type="PhylomeDB" id="A7IPP6"/>
<dbReference type="Proteomes" id="UP000002417">
    <property type="component" value="Chromosome"/>
</dbReference>
<dbReference type="GO" id="GO:0005737">
    <property type="term" value="C:cytoplasm"/>
    <property type="evidence" value="ECO:0007669"/>
    <property type="project" value="UniProtKB-ARBA"/>
</dbReference>
<dbReference type="GO" id="GO:0000428">
    <property type="term" value="C:DNA-directed RNA polymerase complex"/>
    <property type="evidence" value="ECO:0007669"/>
    <property type="project" value="UniProtKB-KW"/>
</dbReference>
<dbReference type="GO" id="GO:0003677">
    <property type="term" value="F:DNA binding"/>
    <property type="evidence" value="ECO:0007669"/>
    <property type="project" value="UniProtKB-UniRule"/>
</dbReference>
<dbReference type="GO" id="GO:0003899">
    <property type="term" value="F:DNA-directed RNA polymerase activity"/>
    <property type="evidence" value="ECO:0007669"/>
    <property type="project" value="UniProtKB-UniRule"/>
</dbReference>
<dbReference type="GO" id="GO:0046983">
    <property type="term" value="F:protein dimerization activity"/>
    <property type="evidence" value="ECO:0007669"/>
    <property type="project" value="InterPro"/>
</dbReference>
<dbReference type="GO" id="GO:0006351">
    <property type="term" value="P:DNA-templated transcription"/>
    <property type="evidence" value="ECO:0007669"/>
    <property type="project" value="UniProtKB-UniRule"/>
</dbReference>
<dbReference type="CDD" id="cd06928">
    <property type="entry name" value="RNAP_alpha_NTD"/>
    <property type="match status" value="1"/>
</dbReference>
<dbReference type="FunFam" id="1.10.150.20:FF:000001">
    <property type="entry name" value="DNA-directed RNA polymerase subunit alpha"/>
    <property type="match status" value="1"/>
</dbReference>
<dbReference type="FunFam" id="2.170.120.12:FF:000001">
    <property type="entry name" value="DNA-directed RNA polymerase subunit alpha"/>
    <property type="match status" value="1"/>
</dbReference>
<dbReference type="Gene3D" id="1.10.150.20">
    <property type="entry name" value="5' to 3' exonuclease, C-terminal subdomain"/>
    <property type="match status" value="1"/>
</dbReference>
<dbReference type="Gene3D" id="2.170.120.12">
    <property type="entry name" value="DNA-directed RNA polymerase, insert domain"/>
    <property type="match status" value="1"/>
</dbReference>
<dbReference type="Gene3D" id="3.30.1360.10">
    <property type="entry name" value="RNA polymerase, RBP11-like subunit"/>
    <property type="match status" value="1"/>
</dbReference>
<dbReference type="HAMAP" id="MF_00059">
    <property type="entry name" value="RNApol_bact_RpoA"/>
    <property type="match status" value="1"/>
</dbReference>
<dbReference type="InterPro" id="IPR011262">
    <property type="entry name" value="DNA-dir_RNA_pol_insert"/>
</dbReference>
<dbReference type="InterPro" id="IPR011263">
    <property type="entry name" value="DNA-dir_RNA_pol_RpoA/D/Rpb3"/>
</dbReference>
<dbReference type="InterPro" id="IPR011773">
    <property type="entry name" value="DNA-dir_RpoA"/>
</dbReference>
<dbReference type="InterPro" id="IPR036603">
    <property type="entry name" value="RBP11-like"/>
</dbReference>
<dbReference type="InterPro" id="IPR011260">
    <property type="entry name" value="RNAP_asu_C"/>
</dbReference>
<dbReference type="InterPro" id="IPR036643">
    <property type="entry name" value="RNApol_insert_sf"/>
</dbReference>
<dbReference type="NCBIfam" id="NF003513">
    <property type="entry name" value="PRK05182.1-2"/>
    <property type="match status" value="1"/>
</dbReference>
<dbReference type="NCBIfam" id="NF003519">
    <property type="entry name" value="PRK05182.2-5"/>
    <property type="match status" value="1"/>
</dbReference>
<dbReference type="NCBIfam" id="TIGR02027">
    <property type="entry name" value="rpoA"/>
    <property type="match status" value="1"/>
</dbReference>
<dbReference type="Pfam" id="PF01000">
    <property type="entry name" value="RNA_pol_A_bac"/>
    <property type="match status" value="1"/>
</dbReference>
<dbReference type="Pfam" id="PF03118">
    <property type="entry name" value="RNA_pol_A_CTD"/>
    <property type="match status" value="1"/>
</dbReference>
<dbReference type="Pfam" id="PF01193">
    <property type="entry name" value="RNA_pol_L"/>
    <property type="match status" value="1"/>
</dbReference>
<dbReference type="SMART" id="SM00662">
    <property type="entry name" value="RPOLD"/>
    <property type="match status" value="1"/>
</dbReference>
<dbReference type="SUPFAM" id="SSF47789">
    <property type="entry name" value="C-terminal domain of RNA polymerase alpha subunit"/>
    <property type="match status" value="1"/>
</dbReference>
<dbReference type="SUPFAM" id="SSF56553">
    <property type="entry name" value="Insert subdomain of RNA polymerase alpha subunit"/>
    <property type="match status" value="1"/>
</dbReference>
<dbReference type="SUPFAM" id="SSF55257">
    <property type="entry name" value="RBP11-like subunits of RNA polymerase"/>
    <property type="match status" value="1"/>
</dbReference>
<sequence length="338" mass="37487">MIQKNWQELIKPEKLQVNPGHDPKRFATVIAEPLERGFGMTLGNALRRILLSSLQGAAVTSIHIDGVLHEFSSIPGVREDVTDIILNVKDVAIRMQGDGPKRMVAKKTGPGVLLAGDIQTVGDVAILNPNLPICTLDEGAELRIEFTVDTGKGYVAADRNRPEDAPIGLIPIDSLYSPVRKVSYKVENTREGQILDYDKLTLQIETNGSITAEDALAYAARILQDQLEIFVNFEEPKRESETTAIQTLPFSPALLKKVDELELSVRSANCLKNDNIVYIGDLIQKSETEMLRTPNFGRKSLNEIKEVLASLGLHLGMEVPGWPPENIEELAKRFEEHY</sequence>
<feature type="chain" id="PRO_1000196651" description="DNA-directed RNA polymerase subunit alpha">
    <location>
        <begin position="1"/>
        <end position="338"/>
    </location>
</feature>
<feature type="region of interest" description="Alpha N-terminal domain (alpha-NTD)" evidence="1">
    <location>
        <begin position="1"/>
        <end position="234"/>
    </location>
</feature>
<feature type="region of interest" description="Alpha C-terminal domain (alpha-CTD)" evidence="1">
    <location>
        <begin position="250"/>
        <end position="338"/>
    </location>
</feature>
<protein>
    <recommendedName>
        <fullName evidence="1">DNA-directed RNA polymerase subunit alpha</fullName>
        <shortName evidence="1">RNAP subunit alpha</shortName>
        <ecNumber evidence="1">2.7.7.6</ecNumber>
    </recommendedName>
    <alternativeName>
        <fullName evidence="1">RNA polymerase subunit alpha</fullName>
    </alternativeName>
    <alternativeName>
        <fullName evidence="1">Transcriptase subunit alpha</fullName>
    </alternativeName>
</protein>
<evidence type="ECO:0000255" key="1">
    <source>
        <dbReference type="HAMAP-Rule" id="MF_00059"/>
    </source>
</evidence>
<gene>
    <name evidence="1" type="primary">rpoA</name>
    <name type="ordered locus">Xaut_4774</name>
</gene>